<sequence length="244" mass="26786">MQGNEQQAYDRGITIFSPDGRLYQVEYAREAVKRGTASVGVRTEDGVVIAADRHARSPLIERDSIEKIHEIDSHVGVASAGHVADARQLIDVARRQSQVNRLRYDEPASVESLTKEITDYIQQYTQTGGARPFGVALLVAGIEDGEPRLFETDPSGTPYEWQAVAIGGSREDIQTFLEEEYAEGMDLEGGIELALRALASVNEDGLDATGVDIATIDVESEQFEKLAEDDIAERLEEFELGGEE</sequence>
<proteinExistence type="inferred from homology"/>
<reference key="1">
    <citation type="journal article" date="2004" name="Genome Res.">
        <title>Genome sequence of Haloarcula marismortui: a halophilic archaeon from the Dead Sea.</title>
        <authorList>
            <person name="Baliga N.S."/>
            <person name="Bonneau R."/>
            <person name="Facciotti M.T."/>
            <person name="Pan M."/>
            <person name="Glusman G."/>
            <person name="Deutsch E.W."/>
            <person name="Shannon P."/>
            <person name="Chiu Y."/>
            <person name="Weng R.S."/>
            <person name="Gan R.R."/>
            <person name="Hung P."/>
            <person name="Date S.V."/>
            <person name="Marcotte E."/>
            <person name="Hood L."/>
            <person name="Ng W.V."/>
        </authorList>
    </citation>
    <scope>NUCLEOTIDE SEQUENCE [LARGE SCALE GENOMIC DNA]</scope>
    <source>
        <strain>ATCC 43049 / DSM 3752 / JCM 8966 / VKM B-1809</strain>
    </source>
</reference>
<organism>
    <name type="scientific">Haloarcula marismortui (strain ATCC 43049 / DSM 3752 / JCM 8966 / VKM B-1809)</name>
    <name type="common">Halobacterium marismortui</name>
    <dbReference type="NCBI Taxonomy" id="272569"/>
    <lineage>
        <taxon>Archaea</taxon>
        <taxon>Methanobacteriati</taxon>
        <taxon>Methanobacteriota</taxon>
        <taxon>Stenosarchaea group</taxon>
        <taxon>Halobacteria</taxon>
        <taxon>Halobacteriales</taxon>
        <taxon>Haloarculaceae</taxon>
        <taxon>Haloarcula</taxon>
    </lineage>
</organism>
<comment type="function">
    <text evidence="1">Component of the proteasome core, a large protease complex with broad specificity involved in protein degradation.</text>
</comment>
<comment type="activity regulation">
    <text evidence="1">The formation of the proteasomal ATPase PAN-20S proteasome complex, via the docking of the C-termini of PAN into the intersubunit pockets in the alpha-rings, triggers opening of the gate for substrate entry. Interconversion between the open-gate and close-gate conformations leads to a dynamic regulation of the 20S proteasome proteolysis activity.</text>
</comment>
<comment type="subunit">
    <text evidence="1">The 20S proteasome core is composed of 14 alpha and 14 beta subunits that assemble into four stacked heptameric rings, resulting in a barrel-shaped structure. The two inner rings, each composed of seven catalytic beta subunits, are sandwiched by two outer rings, each composed of seven alpha subunits. The catalytic chamber with the active sites is on the inside of the barrel. Has a gated structure, the ends of the cylinder being occluded by the N-termini of the alpha-subunits. Is capped at one or both ends by the proteasome regulatory ATPase, PAN.</text>
</comment>
<comment type="subcellular location">
    <subcellularLocation>
        <location evidence="1">Cytoplasm</location>
    </subcellularLocation>
</comment>
<comment type="similarity">
    <text evidence="1">Belongs to the peptidase T1A family.</text>
</comment>
<name>PSA2_HALMA</name>
<keyword id="KW-0963">Cytoplasm</keyword>
<keyword id="KW-0647">Proteasome</keyword>
<keyword id="KW-1185">Reference proteome</keyword>
<evidence type="ECO:0000255" key="1">
    <source>
        <dbReference type="HAMAP-Rule" id="MF_00289"/>
    </source>
</evidence>
<gene>
    <name evidence="1" type="primary">psmA2</name>
    <name type="ordered locus">rrnAC1773</name>
</gene>
<protein>
    <recommendedName>
        <fullName evidence="1">Proteasome subunit alpha 2</fullName>
    </recommendedName>
    <alternativeName>
        <fullName evidence="1">20S proteasome alpha subunit 2</fullName>
    </alternativeName>
    <alternativeName>
        <fullName evidence="1">Proteasome core protein PsmA 2</fullName>
    </alternativeName>
</protein>
<feature type="chain" id="PRO_0000124169" description="Proteasome subunit alpha 2">
    <location>
        <begin position="1"/>
        <end position="244"/>
    </location>
</feature>
<accession>Q5V1D4</accession>
<dbReference type="EMBL" id="AY596297">
    <property type="protein sequence ID" value="AAV46668.1"/>
    <property type="molecule type" value="Genomic_DNA"/>
</dbReference>
<dbReference type="RefSeq" id="WP_011223832.1">
    <property type="nucleotide sequence ID" value="NC_006396.1"/>
</dbReference>
<dbReference type="SMR" id="Q5V1D4"/>
<dbReference type="STRING" id="272569.rrnAC1773"/>
<dbReference type="PaxDb" id="272569-rrnAC1773"/>
<dbReference type="EnsemblBacteria" id="AAV46668">
    <property type="protein sequence ID" value="AAV46668"/>
    <property type="gene ID" value="rrnAC1773"/>
</dbReference>
<dbReference type="GeneID" id="40152721"/>
<dbReference type="KEGG" id="hma:rrnAC1773"/>
<dbReference type="PATRIC" id="fig|272569.17.peg.2448"/>
<dbReference type="eggNOG" id="arCOG00971">
    <property type="taxonomic scope" value="Archaea"/>
</dbReference>
<dbReference type="HOGENOM" id="CLU_035750_4_1_2"/>
<dbReference type="Proteomes" id="UP000001169">
    <property type="component" value="Chromosome I"/>
</dbReference>
<dbReference type="GO" id="GO:0005737">
    <property type="term" value="C:cytoplasm"/>
    <property type="evidence" value="ECO:0007669"/>
    <property type="project" value="UniProtKB-SubCell"/>
</dbReference>
<dbReference type="GO" id="GO:0019773">
    <property type="term" value="C:proteasome core complex, alpha-subunit complex"/>
    <property type="evidence" value="ECO:0000250"/>
    <property type="project" value="UniProtKB"/>
</dbReference>
<dbReference type="GO" id="GO:0004298">
    <property type="term" value="F:threonine-type endopeptidase activity"/>
    <property type="evidence" value="ECO:0007669"/>
    <property type="project" value="InterPro"/>
</dbReference>
<dbReference type="GO" id="GO:0010498">
    <property type="term" value="P:proteasomal protein catabolic process"/>
    <property type="evidence" value="ECO:0007669"/>
    <property type="project" value="UniProtKB-UniRule"/>
</dbReference>
<dbReference type="GO" id="GO:0006511">
    <property type="term" value="P:ubiquitin-dependent protein catabolic process"/>
    <property type="evidence" value="ECO:0007669"/>
    <property type="project" value="InterPro"/>
</dbReference>
<dbReference type="CDD" id="cd03756">
    <property type="entry name" value="proteasome_alpha_archeal"/>
    <property type="match status" value="1"/>
</dbReference>
<dbReference type="FunFam" id="3.60.20.10:FF:000004">
    <property type="entry name" value="Proteasome subunit alpha type-4"/>
    <property type="match status" value="1"/>
</dbReference>
<dbReference type="Gene3D" id="3.60.20.10">
    <property type="entry name" value="Glutamine Phosphoribosylpyrophosphate, subunit 1, domain 1"/>
    <property type="match status" value="1"/>
</dbReference>
<dbReference type="HAMAP" id="MF_00289_A">
    <property type="entry name" value="Proteasome_A_A"/>
    <property type="match status" value="1"/>
</dbReference>
<dbReference type="InterPro" id="IPR029055">
    <property type="entry name" value="Ntn_hydrolases_N"/>
</dbReference>
<dbReference type="InterPro" id="IPR050115">
    <property type="entry name" value="Proteasome_alpha"/>
</dbReference>
<dbReference type="InterPro" id="IPR023332">
    <property type="entry name" value="Proteasome_alpha-type"/>
</dbReference>
<dbReference type="InterPro" id="IPR019982">
    <property type="entry name" value="Proteasome_asu_arc"/>
</dbReference>
<dbReference type="InterPro" id="IPR000426">
    <property type="entry name" value="Proteasome_asu_N"/>
</dbReference>
<dbReference type="InterPro" id="IPR001353">
    <property type="entry name" value="Proteasome_sua/b"/>
</dbReference>
<dbReference type="NCBIfam" id="TIGR03633">
    <property type="entry name" value="arc_protsome_A"/>
    <property type="match status" value="1"/>
</dbReference>
<dbReference type="NCBIfam" id="NF003075">
    <property type="entry name" value="PRK03996.1"/>
    <property type="match status" value="1"/>
</dbReference>
<dbReference type="PANTHER" id="PTHR11599">
    <property type="entry name" value="PROTEASOME SUBUNIT ALPHA/BETA"/>
    <property type="match status" value="1"/>
</dbReference>
<dbReference type="Pfam" id="PF00227">
    <property type="entry name" value="Proteasome"/>
    <property type="match status" value="1"/>
</dbReference>
<dbReference type="Pfam" id="PF10584">
    <property type="entry name" value="Proteasome_A_N"/>
    <property type="match status" value="1"/>
</dbReference>
<dbReference type="SMART" id="SM00948">
    <property type="entry name" value="Proteasome_A_N"/>
    <property type="match status" value="1"/>
</dbReference>
<dbReference type="SUPFAM" id="SSF56235">
    <property type="entry name" value="N-terminal nucleophile aminohydrolases (Ntn hydrolases)"/>
    <property type="match status" value="1"/>
</dbReference>
<dbReference type="PROSITE" id="PS00388">
    <property type="entry name" value="PROTEASOME_ALPHA_1"/>
    <property type="match status" value="1"/>
</dbReference>
<dbReference type="PROSITE" id="PS51475">
    <property type="entry name" value="PROTEASOME_ALPHA_2"/>
    <property type="match status" value="1"/>
</dbReference>